<accession>Q1H396</accession>
<feature type="chain" id="PRO_1000010421" description="Heat-inducible transcription repressor HrcA">
    <location>
        <begin position="1"/>
        <end position="339"/>
    </location>
</feature>
<dbReference type="EMBL" id="CP000284">
    <property type="protein sequence ID" value="ABE49041.1"/>
    <property type="molecule type" value="Genomic_DNA"/>
</dbReference>
<dbReference type="RefSeq" id="WP_011479138.1">
    <property type="nucleotide sequence ID" value="NC_007947.1"/>
</dbReference>
<dbReference type="SMR" id="Q1H396"/>
<dbReference type="STRING" id="265072.Mfla_0773"/>
<dbReference type="DNASU" id="4000629"/>
<dbReference type="KEGG" id="mfa:Mfla_0773"/>
<dbReference type="eggNOG" id="COG1420">
    <property type="taxonomic scope" value="Bacteria"/>
</dbReference>
<dbReference type="HOGENOM" id="CLU_050019_0_0_4"/>
<dbReference type="OrthoDB" id="9783139at2"/>
<dbReference type="Proteomes" id="UP000002440">
    <property type="component" value="Chromosome"/>
</dbReference>
<dbReference type="GO" id="GO:0003677">
    <property type="term" value="F:DNA binding"/>
    <property type="evidence" value="ECO:0007669"/>
    <property type="project" value="InterPro"/>
</dbReference>
<dbReference type="GO" id="GO:0045892">
    <property type="term" value="P:negative regulation of DNA-templated transcription"/>
    <property type="evidence" value="ECO:0007669"/>
    <property type="project" value="UniProtKB-UniRule"/>
</dbReference>
<dbReference type="Gene3D" id="3.30.450.40">
    <property type="match status" value="1"/>
</dbReference>
<dbReference type="Gene3D" id="3.30.390.60">
    <property type="entry name" value="Heat-inducible transcription repressor hrca homolog, domain 3"/>
    <property type="match status" value="1"/>
</dbReference>
<dbReference type="Gene3D" id="1.10.10.10">
    <property type="entry name" value="Winged helix-like DNA-binding domain superfamily/Winged helix DNA-binding domain"/>
    <property type="match status" value="1"/>
</dbReference>
<dbReference type="HAMAP" id="MF_00081">
    <property type="entry name" value="HrcA"/>
    <property type="match status" value="1"/>
</dbReference>
<dbReference type="InterPro" id="IPR029016">
    <property type="entry name" value="GAF-like_dom_sf"/>
</dbReference>
<dbReference type="InterPro" id="IPR002571">
    <property type="entry name" value="HrcA"/>
</dbReference>
<dbReference type="InterPro" id="IPR021153">
    <property type="entry name" value="HrcA_C"/>
</dbReference>
<dbReference type="InterPro" id="IPR036388">
    <property type="entry name" value="WH-like_DNA-bd_sf"/>
</dbReference>
<dbReference type="InterPro" id="IPR036390">
    <property type="entry name" value="WH_DNA-bd_sf"/>
</dbReference>
<dbReference type="InterPro" id="IPR023120">
    <property type="entry name" value="WHTH_transcript_rep_HrcA_IDD"/>
</dbReference>
<dbReference type="NCBIfam" id="TIGR00331">
    <property type="entry name" value="hrcA"/>
    <property type="match status" value="1"/>
</dbReference>
<dbReference type="PANTHER" id="PTHR34824">
    <property type="entry name" value="HEAT-INDUCIBLE TRANSCRIPTION REPRESSOR HRCA"/>
    <property type="match status" value="1"/>
</dbReference>
<dbReference type="PANTHER" id="PTHR34824:SF1">
    <property type="entry name" value="HEAT-INDUCIBLE TRANSCRIPTION REPRESSOR HRCA"/>
    <property type="match status" value="1"/>
</dbReference>
<dbReference type="Pfam" id="PF01628">
    <property type="entry name" value="HrcA"/>
    <property type="match status" value="1"/>
</dbReference>
<dbReference type="PIRSF" id="PIRSF005485">
    <property type="entry name" value="HrcA"/>
    <property type="match status" value="1"/>
</dbReference>
<dbReference type="SUPFAM" id="SSF55781">
    <property type="entry name" value="GAF domain-like"/>
    <property type="match status" value="1"/>
</dbReference>
<dbReference type="SUPFAM" id="SSF46785">
    <property type="entry name" value="Winged helix' DNA-binding domain"/>
    <property type="match status" value="1"/>
</dbReference>
<proteinExistence type="inferred from homology"/>
<evidence type="ECO:0000255" key="1">
    <source>
        <dbReference type="HAMAP-Rule" id="MF_00081"/>
    </source>
</evidence>
<keyword id="KW-1185">Reference proteome</keyword>
<keyword id="KW-0678">Repressor</keyword>
<keyword id="KW-0346">Stress response</keyword>
<keyword id="KW-0804">Transcription</keyword>
<keyword id="KW-0805">Transcription regulation</keyword>
<gene>
    <name evidence="1" type="primary">hrcA</name>
    <name type="ordered locus">Mfla_0773</name>
</gene>
<sequence>MLDKRAQILLKTLIEHYISDGQPVGSRKLSVASGLDLSPASIRNIMSELEDHGFIASPHTSAGRIPTQRGYRLFVDTLLTVQPLQNQEIRKLENVLSSPDPQELINKAAELLSSLTHFAGLVMIPKRQGAAFRHLEFLPLSEKRILVIIVTTDGAVQNRIILAEKPYSASDLTQASNFFNQHYAGNTLDEVKQKLHEELKQMQSDMTRLMAAALEASSKTADNKDGVVIAGKRNLLDVQDLSTNVSSLRKLFEMFEHRTSLMQLLDQSQKASGVQIFIGGESGYLPLDECSMVTAPYETNGQTIGTLGVIGPTRMAYERVIPIVDITAKLLSNALSNNH</sequence>
<organism>
    <name type="scientific">Methylobacillus flagellatus (strain ATCC 51484 / DSM 6875 / VKM B-1610 / KT)</name>
    <dbReference type="NCBI Taxonomy" id="265072"/>
    <lineage>
        <taxon>Bacteria</taxon>
        <taxon>Pseudomonadati</taxon>
        <taxon>Pseudomonadota</taxon>
        <taxon>Betaproteobacteria</taxon>
        <taxon>Nitrosomonadales</taxon>
        <taxon>Methylophilaceae</taxon>
        <taxon>Methylobacillus</taxon>
    </lineage>
</organism>
<comment type="function">
    <text evidence="1">Negative regulator of class I heat shock genes (grpE-dnaK-dnaJ and groELS operons). Prevents heat-shock induction of these operons.</text>
</comment>
<comment type="similarity">
    <text evidence="1">Belongs to the HrcA family.</text>
</comment>
<name>HRCA_METFK</name>
<protein>
    <recommendedName>
        <fullName evidence="1">Heat-inducible transcription repressor HrcA</fullName>
    </recommendedName>
</protein>
<reference key="1">
    <citation type="submission" date="2006-03" db="EMBL/GenBank/DDBJ databases">
        <title>Complete sequence of Methylobacillus flagellatus KT.</title>
        <authorList>
            <consortium name="US DOE Joint Genome Institute"/>
            <person name="Copeland A."/>
            <person name="Lucas S."/>
            <person name="Lapidus A."/>
            <person name="Barry K."/>
            <person name="Detter J.C."/>
            <person name="Glavina del Rio T."/>
            <person name="Hammon N."/>
            <person name="Israni S."/>
            <person name="Dalin E."/>
            <person name="Tice H."/>
            <person name="Pitluck S."/>
            <person name="Brettin T."/>
            <person name="Bruce D."/>
            <person name="Han C."/>
            <person name="Tapia R."/>
            <person name="Saunders E."/>
            <person name="Gilna P."/>
            <person name="Schmutz J."/>
            <person name="Larimer F."/>
            <person name="Land M."/>
            <person name="Kyrpides N."/>
            <person name="Anderson I."/>
            <person name="Richardson P."/>
        </authorList>
    </citation>
    <scope>NUCLEOTIDE SEQUENCE [LARGE SCALE GENOMIC DNA]</scope>
    <source>
        <strain>ATCC 51484 / DSM 6875 / VKM B-1610 / KT</strain>
    </source>
</reference>